<organism>
    <name type="scientific">Solanum tuberosum</name>
    <name type="common">Potato</name>
    <dbReference type="NCBI Taxonomy" id="4113"/>
    <lineage>
        <taxon>Eukaryota</taxon>
        <taxon>Viridiplantae</taxon>
        <taxon>Streptophyta</taxon>
        <taxon>Embryophyta</taxon>
        <taxon>Tracheophyta</taxon>
        <taxon>Spermatophyta</taxon>
        <taxon>Magnoliopsida</taxon>
        <taxon>eudicotyledons</taxon>
        <taxon>Gunneridae</taxon>
        <taxon>Pentapetalae</taxon>
        <taxon>asterids</taxon>
        <taxon>lamiids</taxon>
        <taxon>Solanales</taxon>
        <taxon>Solanaceae</taxon>
        <taxon>Solanoideae</taxon>
        <taxon>Solaneae</taxon>
        <taxon>Solanum</taxon>
    </lineage>
</organism>
<evidence type="ECO:0000250" key="1">
    <source>
        <dbReference type="UniProtKB" id="P49040"/>
    </source>
</evidence>
<evidence type="ECO:0000305" key="2"/>
<keyword id="KW-0328">Glycosyltransferase</keyword>
<keyword id="KW-1185">Reference proteome</keyword>
<keyword id="KW-0808">Transferase</keyword>
<sequence>MAERVLTRVHSLRERLDATLAAHRNEILLFLSRIESHGKGILKPHQLLAEFESIHKEDKDKLNDHAFEEVLKSTQEAIVLPPWVALAIRLRPGVWEYVRVNVNALIVEELTVPEFLQFKEELVNGTSNDNFVLELDFEPFTASFPKPTLTKSIGNGVEFLNRHLSAKMFHDKESMTPLLEFLRVHHYKGKTMMLNDRIQNLYTLQKVLRKAEEYLTTLSPETSYSAFEHKFQEIGLERGWGDTAERVLEMICMLLDLLEAPDSCTLEKFLGRIPMVFNVVILSPHGYFAQENVLGYPDTGGQVVYILDQVPALEREMLKRIKEQGLDIKPRILIVTRLLPDAVGTTCGQRLEKVFGTEHSHILRVPFRTEKGIVRKWISRFEVWPYMETFIEDVGKEITAELQAKPDLIIGNYSEGNLAASLLAHKLGVTQCTIAHALEKTKYPDSDIYLNKFDEKYHFSAQFTADLIAMNHTDFIITSTFQEIAGSKDTVGQYESHMAFTMPGLYRVVHGIDVFDPKFNIVSPGADVNLYFPYSEKEKRLTTFHPEIEDLLFSDVENEEHLCVLKDRNKPIIFTMARLDRVKNLTGLVEWYAKNPRLRELVNLVVVGGDRRKESKDLEEQAEMKKMYELIKTHNLNGQFRWISSQMNRVRNGELYRYIADTRGAFVQPAFYEAFGLTVVEAMSCGLPTFATNQGGPAEIIVHGKSGFQIDPYHGEQAADLLADFFEKCKVDPSHWEAISEGGLKRIQEKYTWQIYSDRLLTLAAVYGFWKHVSKLDRLEIRRYLEMFYALKFRKLAQLVPLAVE</sequence>
<protein>
    <recommendedName>
        <fullName>Sucrose synthase</fullName>
        <ecNumber>2.4.1.13</ecNumber>
    </recommendedName>
    <alternativeName>
        <fullName>SS65</fullName>
    </alternativeName>
    <alternativeName>
        <fullName>Sucrose-UDP glucosyltransferase</fullName>
    </alternativeName>
</protein>
<accession>P49039</accession>
<feature type="chain" id="PRO_0000204662" description="Sucrose synthase">
    <location>
        <begin position="1"/>
        <end position="805"/>
    </location>
</feature>
<feature type="region of interest" description="GT-B glycosyltransferase" evidence="1">
    <location>
        <begin position="275"/>
        <end position="752"/>
    </location>
</feature>
<name>SUS2_SOLTU</name>
<reference key="1">
    <citation type="journal article" date="1995" name="Plant Cell">
        <title>Sink- and vascular-associated sucrose synthase functions are encoded by different gene classes in potato.</title>
        <authorList>
            <person name="Fu H."/>
            <person name="Park W.D."/>
        </authorList>
    </citation>
    <scope>NUCLEOTIDE SEQUENCE [GENOMIC DNA]</scope>
    <source>
        <strain>cv. FL1607</strain>
        <tissue>Leaf</tissue>
    </source>
</reference>
<comment type="function">
    <text>Sucrose-cleaving enzyme that provides UDP-glucose and fructose for various metabolic pathways.</text>
</comment>
<comment type="catalytic activity">
    <reaction>
        <text>an NDP-alpha-D-glucose + D-fructose = a ribonucleoside 5'-diphosphate + sucrose + H(+)</text>
        <dbReference type="Rhea" id="RHEA:16241"/>
        <dbReference type="ChEBI" id="CHEBI:15378"/>
        <dbReference type="ChEBI" id="CHEBI:17992"/>
        <dbReference type="ChEBI" id="CHEBI:37721"/>
        <dbReference type="ChEBI" id="CHEBI:57930"/>
        <dbReference type="ChEBI" id="CHEBI:76533"/>
        <dbReference type="EC" id="2.4.1.13"/>
    </reaction>
</comment>
<comment type="similarity">
    <text evidence="2">Belongs to the glycosyltransferase 1 family. Plant sucrose synthase subfamily.</text>
</comment>
<proteinExistence type="inferred from homology"/>
<dbReference type="EC" id="2.4.1.13"/>
<dbReference type="EMBL" id="U24088">
    <property type="protein sequence ID" value="AAA97572.1"/>
    <property type="molecule type" value="Genomic_DNA"/>
</dbReference>
<dbReference type="SMR" id="P49039"/>
<dbReference type="FunCoup" id="P49039">
    <property type="interactions" value="132"/>
</dbReference>
<dbReference type="STRING" id="4113.P49039"/>
<dbReference type="CAZy" id="GT4">
    <property type="family name" value="Glycosyltransferase Family 4"/>
</dbReference>
<dbReference type="PaxDb" id="4113-PGSC0003DMT400035262"/>
<dbReference type="eggNOG" id="KOG0853">
    <property type="taxonomic scope" value="Eukaryota"/>
</dbReference>
<dbReference type="InParanoid" id="P49039"/>
<dbReference type="Proteomes" id="UP000011115">
    <property type="component" value="Unassembled WGS sequence"/>
</dbReference>
<dbReference type="ExpressionAtlas" id="P49039">
    <property type="expression patterns" value="baseline and differential"/>
</dbReference>
<dbReference type="GO" id="GO:0016157">
    <property type="term" value="F:sucrose synthase activity"/>
    <property type="evidence" value="ECO:0000318"/>
    <property type="project" value="GO_Central"/>
</dbReference>
<dbReference type="GO" id="GO:0005985">
    <property type="term" value="P:sucrose metabolic process"/>
    <property type="evidence" value="ECO:0007669"/>
    <property type="project" value="InterPro"/>
</dbReference>
<dbReference type="FunFam" id="1.20.120.1230:FF:000001">
    <property type="entry name" value="Sucrose synthase"/>
    <property type="match status" value="1"/>
</dbReference>
<dbReference type="FunFam" id="3.10.450.330:FF:000001">
    <property type="entry name" value="Sucrose synthase"/>
    <property type="match status" value="1"/>
</dbReference>
<dbReference type="FunFam" id="3.40.50.2000:FF:000006">
    <property type="entry name" value="Sucrose synthase"/>
    <property type="match status" value="1"/>
</dbReference>
<dbReference type="Gene3D" id="1.20.120.1230">
    <property type="match status" value="1"/>
</dbReference>
<dbReference type="Gene3D" id="3.10.450.330">
    <property type="match status" value="1"/>
</dbReference>
<dbReference type="Gene3D" id="3.40.50.2000">
    <property type="entry name" value="Glycogen Phosphorylase B"/>
    <property type="match status" value="2"/>
</dbReference>
<dbReference type="InterPro" id="IPR001296">
    <property type="entry name" value="Glyco_trans_1"/>
</dbReference>
<dbReference type="InterPro" id="IPR000368">
    <property type="entry name" value="Sucrose_synth_GT-B1"/>
</dbReference>
<dbReference type="InterPro" id="IPR012820">
    <property type="entry name" value="Sucrose_synthase_pln/cyn"/>
</dbReference>
<dbReference type="InterPro" id="IPR056736">
    <property type="entry name" value="SUS_EPBD"/>
</dbReference>
<dbReference type="InterPro" id="IPR056735">
    <property type="entry name" value="SUS_N"/>
</dbReference>
<dbReference type="NCBIfam" id="TIGR02470">
    <property type="entry name" value="sucr_synth"/>
    <property type="match status" value="1"/>
</dbReference>
<dbReference type="PANTHER" id="PTHR45839">
    <property type="match status" value="1"/>
</dbReference>
<dbReference type="PANTHER" id="PTHR45839:SF7">
    <property type="entry name" value="SUCROSE SYNTHASE 1"/>
    <property type="match status" value="1"/>
</dbReference>
<dbReference type="Pfam" id="PF00534">
    <property type="entry name" value="Glycos_transf_1"/>
    <property type="match status" value="1"/>
</dbReference>
<dbReference type="Pfam" id="PF00862">
    <property type="entry name" value="GT-B_Sucrose_synth"/>
    <property type="match status" value="1"/>
</dbReference>
<dbReference type="Pfam" id="PF24862">
    <property type="entry name" value="SUS_EPBD"/>
    <property type="match status" value="1"/>
</dbReference>
<dbReference type="Pfam" id="PF24861">
    <property type="entry name" value="SUS_N"/>
    <property type="match status" value="1"/>
</dbReference>
<dbReference type="SUPFAM" id="SSF53756">
    <property type="entry name" value="UDP-Glycosyltransferase/glycogen phosphorylase"/>
    <property type="match status" value="1"/>
</dbReference>